<accession>Q07016</accession>
<comment type="function">
    <text evidence="1">Transcription regulator. Forms a sequence-specific DNA-binding protein complex with MYC or MAD which recognizes the core sequence 5'-CAC[GA]TG-3'. The MYC-MAX complex is a transcriptional activator, whereas the MAD-MAX complex is a repressor (By similarity).</text>
</comment>
<comment type="subunit">
    <text evidence="1">Efficient DNA binding requires dimerization with another bHLH protein. MYC/MAX heterodimers bind to target DNA with high affinity. MAX may also form homodimers which recognize the same target sequence, but which are unable to function as transcription activators. Component of some MLL1/MLL complex (By similarity).</text>
</comment>
<comment type="subcellular location">
    <subcellularLocation>
        <location>Nucleus</location>
    </subcellularLocation>
</comment>
<comment type="alternative products">
    <event type="alternative splicing"/>
    <isoform>
        <id>Q07016-1</id>
        <name>XMAX4</name>
        <name>XMAX2</name>
        <sequence type="displayed"/>
    </isoform>
    <isoform>
        <id>Q07016-2</id>
        <name>XMAX1</name>
        <sequence type="described" ref="VSP_002122 VSP_002123"/>
    </isoform>
    <isoform>
        <id>Q07016-3</id>
        <name>XMAX2</name>
        <name>XMAX1</name>
        <sequence type="described" ref="VSP_002123"/>
    </isoform>
    <isoform>
        <id>Q07016-4</id>
        <name>XMAX3</name>
        <sequence type="described" ref="VSP_002122"/>
    </isoform>
</comment>
<comment type="tissue specificity">
    <text>All four alternatively spliced forms are present during development and in all adult tissues examined.</text>
</comment>
<comment type="PTM">
    <text evidence="6">Phosphorylated.</text>
</comment>
<comment type="similarity">
    <text evidence="6">Belongs to the MAX family.</text>
</comment>
<protein>
    <recommendedName>
        <fullName>Protein max</fullName>
        <shortName>xMAX</shortName>
    </recommendedName>
    <alternativeName>
        <fullName>Myc-associated factor X</fullName>
    </alternativeName>
</protein>
<feature type="chain" id="PRO_0000127274" description="Protein max">
    <location>
        <begin position="1"/>
        <end position="163"/>
    </location>
</feature>
<feature type="domain" description="bHLH" evidence="2">
    <location>
        <begin position="23"/>
        <end position="74"/>
    </location>
</feature>
<feature type="region of interest" description="Disordered" evidence="3">
    <location>
        <begin position="1"/>
        <end position="40"/>
    </location>
</feature>
<feature type="region of interest" description="Disordered" evidence="3">
    <location>
        <begin position="98"/>
        <end position="117"/>
    </location>
</feature>
<feature type="region of interest" description="Disordered" evidence="3">
    <location>
        <begin position="128"/>
        <end position="163"/>
    </location>
</feature>
<feature type="compositionally biased region" description="Acidic residues" evidence="3">
    <location>
        <begin position="1"/>
        <end position="13"/>
    </location>
</feature>
<feature type="compositionally biased region" description="Basic and acidic residues" evidence="3">
    <location>
        <begin position="29"/>
        <end position="40"/>
    </location>
</feature>
<feature type="compositionally biased region" description="Low complexity" evidence="3">
    <location>
        <begin position="134"/>
        <end position="146"/>
    </location>
</feature>
<feature type="splice variant" id="VSP_002122" description="In isoform XMAX1 and isoform XMAX3." evidence="4">
    <location>
        <begin position="13"/>
        <end position="21"/>
    </location>
</feature>
<feature type="splice variant" id="VSP_002123" description="In isoform XMAX1 and isoform XMAX2." evidence="4 5">
    <location>
        <begin position="99"/>
        <end position="125"/>
    </location>
</feature>
<feature type="sequence conflict" description="In Ref. 1; AAA17424." evidence="6" ref="1">
    <original>S</original>
    <variation>A</variation>
    <location>
        <position position="52"/>
    </location>
</feature>
<evidence type="ECO:0000250" key="1"/>
<evidence type="ECO:0000255" key="2">
    <source>
        <dbReference type="PROSITE-ProRule" id="PRU00981"/>
    </source>
</evidence>
<evidence type="ECO:0000256" key="3">
    <source>
        <dbReference type="SAM" id="MobiDB-lite"/>
    </source>
</evidence>
<evidence type="ECO:0000303" key="4">
    <source>
    </source>
</evidence>
<evidence type="ECO:0000303" key="5">
    <source>
    </source>
</evidence>
<evidence type="ECO:0000305" key="6"/>
<dbReference type="EMBL" id="L09739">
    <property type="protein sequence ID" value="AAA17425.1"/>
    <property type="molecule type" value="mRNA"/>
</dbReference>
<dbReference type="EMBL" id="L09738">
    <property type="protein sequence ID" value="AAA17424.1"/>
    <property type="molecule type" value="mRNA"/>
</dbReference>
<dbReference type="EMBL" id="L04923">
    <property type="status" value="NOT_ANNOTATED_CDS"/>
    <property type="molecule type" value="mRNA"/>
</dbReference>
<dbReference type="EMBL" id="L04924">
    <property type="status" value="NOT_ANNOTATED_CDS"/>
    <property type="molecule type" value="mRNA"/>
</dbReference>
<dbReference type="PIR" id="B56883">
    <property type="entry name" value="B56883"/>
</dbReference>
<dbReference type="PIR" id="I51586">
    <property type="entry name" value="I51586"/>
</dbReference>
<dbReference type="PIR" id="I51587">
    <property type="entry name" value="I51587"/>
</dbReference>
<dbReference type="RefSeq" id="NP_001079118.1">
    <molecule id="Q07016-1"/>
    <property type="nucleotide sequence ID" value="NM_001085649.1"/>
</dbReference>
<dbReference type="RefSeq" id="NP_001089042.1">
    <property type="nucleotide sequence ID" value="NM_001095573.1"/>
</dbReference>
<dbReference type="SMR" id="Q07016"/>
<dbReference type="DNASU" id="504192"/>
<dbReference type="GeneID" id="373652"/>
<dbReference type="KEGG" id="xla:373652"/>
<dbReference type="CTD" id="373652"/>
<dbReference type="OrthoDB" id="9909359at2759"/>
<dbReference type="Proteomes" id="UP000186698">
    <property type="component" value="Chromosome 8S"/>
</dbReference>
<dbReference type="Bgee" id="373652">
    <property type="expression patterns" value="Expressed in testis and 19 other cell types or tissues"/>
</dbReference>
<dbReference type="GO" id="GO:0071339">
    <property type="term" value="C:MLL1 complex"/>
    <property type="evidence" value="ECO:0000250"/>
    <property type="project" value="UniProtKB"/>
</dbReference>
<dbReference type="GO" id="GO:0005634">
    <property type="term" value="C:nucleus"/>
    <property type="evidence" value="ECO:0000314"/>
    <property type="project" value="CAFA"/>
</dbReference>
<dbReference type="GO" id="GO:0090575">
    <property type="term" value="C:RNA polymerase II transcription regulator complex"/>
    <property type="evidence" value="ECO:0000318"/>
    <property type="project" value="GO_Central"/>
</dbReference>
<dbReference type="GO" id="GO:0003677">
    <property type="term" value="F:DNA binding"/>
    <property type="evidence" value="ECO:0007669"/>
    <property type="project" value="UniProtKB-KW"/>
</dbReference>
<dbReference type="GO" id="GO:0003700">
    <property type="term" value="F:DNA-binding transcription factor activity"/>
    <property type="evidence" value="ECO:0000318"/>
    <property type="project" value="GO_Central"/>
</dbReference>
<dbReference type="GO" id="GO:0046983">
    <property type="term" value="F:protein dimerization activity"/>
    <property type="evidence" value="ECO:0007669"/>
    <property type="project" value="InterPro"/>
</dbReference>
<dbReference type="GO" id="GO:0045944">
    <property type="term" value="P:positive regulation of transcription by RNA polymerase II"/>
    <property type="evidence" value="ECO:0000318"/>
    <property type="project" value="GO_Central"/>
</dbReference>
<dbReference type="CDD" id="cd11406">
    <property type="entry name" value="bHLHzip_Max"/>
    <property type="match status" value="1"/>
</dbReference>
<dbReference type="FunFam" id="4.10.280.10:FF:000023">
    <property type="entry name" value="MAX isoform 13"/>
    <property type="match status" value="1"/>
</dbReference>
<dbReference type="Gene3D" id="4.10.280.10">
    <property type="entry name" value="Helix-loop-helix DNA-binding domain"/>
    <property type="match status" value="1"/>
</dbReference>
<dbReference type="InterPro" id="IPR011598">
    <property type="entry name" value="bHLH_dom"/>
</dbReference>
<dbReference type="InterPro" id="IPR036638">
    <property type="entry name" value="HLH_DNA-bd_sf"/>
</dbReference>
<dbReference type="PANTHER" id="PTHR10328:SF3">
    <property type="entry name" value="PROTEIN MAX"/>
    <property type="match status" value="1"/>
</dbReference>
<dbReference type="PANTHER" id="PTHR10328">
    <property type="entry name" value="PROTEIN MAX MYC-ASSOCIATED FACTOR X"/>
    <property type="match status" value="1"/>
</dbReference>
<dbReference type="Pfam" id="PF00010">
    <property type="entry name" value="HLH"/>
    <property type="match status" value="1"/>
</dbReference>
<dbReference type="SMART" id="SM00353">
    <property type="entry name" value="HLH"/>
    <property type="match status" value="1"/>
</dbReference>
<dbReference type="SUPFAM" id="SSF47459">
    <property type="entry name" value="HLH, helix-loop-helix DNA-binding domain"/>
    <property type="match status" value="1"/>
</dbReference>
<dbReference type="PROSITE" id="PS50888">
    <property type="entry name" value="BHLH"/>
    <property type="match status" value="1"/>
</dbReference>
<proteinExistence type="evidence at transcript level"/>
<name>MAX_XENLA</name>
<sequence>MSDNDDIEVESDEDSSRFPYSADKRAHHNALERKRRDHIKDSFHGLRDSVPSLQGEKASRAQILDKATEYIQYMRRKNHTHQQDIDDLKRQNALLEQQVQISNPKPPSNGAPEQKNVLQLLSPSKVRALEKAKSSSQLQSNYSSSESETEEPQSRKKLRMDAS</sequence>
<reference key="1">
    <citation type="journal article" date="1994" name="Oncogene">
        <title>Analysis of a variant Max sequence expressed in Xenopus laevis.</title>
        <authorList>
            <person name="Tonissen K.F."/>
            <person name="Krieg P.A."/>
        </authorList>
    </citation>
    <scope>NUCLEOTIDE SEQUENCE [MRNA] (ISOFORMS XMAX1; XMAX2; XMAX3 AND XMAX4)</scope>
</reference>
<reference key="2">
    <citation type="journal article" date="1993" name="Cell Growth Differ.">
        <title>Expression of two distinct homologues of Xenopus Max during early development.</title>
        <authorList>
            <person name="King M.W."/>
            <person name="Blackwood E.M."/>
            <person name="Eisenman R.N."/>
        </authorList>
    </citation>
    <scope>NUCLEOTIDE SEQUENCE [MRNA] (ISOFORMS XMAX2 AND XMAX4)</scope>
</reference>
<gene>
    <name type="primary">max</name>
</gene>
<keyword id="KW-0010">Activator</keyword>
<keyword id="KW-0025">Alternative splicing</keyword>
<keyword id="KW-0238">DNA-binding</keyword>
<keyword id="KW-0539">Nucleus</keyword>
<keyword id="KW-0597">Phosphoprotein</keyword>
<keyword id="KW-1185">Reference proteome</keyword>
<keyword id="KW-0678">Repressor</keyword>
<keyword id="KW-0804">Transcription</keyword>
<keyword id="KW-0805">Transcription regulation</keyword>
<organism>
    <name type="scientific">Xenopus laevis</name>
    <name type="common">African clawed frog</name>
    <dbReference type="NCBI Taxonomy" id="8355"/>
    <lineage>
        <taxon>Eukaryota</taxon>
        <taxon>Metazoa</taxon>
        <taxon>Chordata</taxon>
        <taxon>Craniata</taxon>
        <taxon>Vertebrata</taxon>
        <taxon>Euteleostomi</taxon>
        <taxon>Amphibia</taxon>
        <taxon>Batrachia</taxon>
        <taxon>Anura</taxon>
        <taxon>Pipoidea</taxon>
        <taxon>Pipidae</taxon>
        <taxon>Xenopodinae</taxon>
        <taxon>Xenopus</taxon>
        <taxon>Xenopus</taxon>
    </lineage>
</organism>